<protein>
    <recommendedName>
        <fullName evidence="1">Glycerol-3-phosphate acyltransferase</fullName>
    </recommendedName>
    <alternativeName>
        <fullName evidence="1">G3P acyltransferase</fullName>
        <shortName evidence="1">GPAT</shortName>
        <ecNumber evidence="1">2.3.1.15</ecNumber>
        <ecNumber evidence="1">2.3.1.n5</ecNumber>
    </alternativeName>
    <alternativeName>
        <fullName evidence="1">Lysophosphatidic acid synthase</fullName>
        <shortName evidence="1">LPA synthase</shortName>
    </alternativeName>
</protein>
<reference key="1">
    <citation type="journal article" date="2011" name="J. Bacteriol.">
        <title>Comparative genomics of 28 Salmonella enterica isolates: evidence for CRISPR-mediated adaptive sublineage evolution.</title>
        <authorList>
            <person name="Fricke W.F."/>
            <person name="Mammel M.K."/>
            <person name="McDermott P.F."/>
            <person name="Tartera C."/>
            <person name="White D.G."/>
            <person name="Leclerc J.E."/>
            <person name="Ravel J."/>
            <person name="Cebula T.A."/>
        </authorList>
    </citation>
    <scope>NUCLEOTIDE SEQUENCE [LARGE SCALE GENOMIC DNA]</scope>
    <source>
        <strain>CT_02021853</strain>
    </source>
</reference>
<organism>
    <name type="scientific">Salmonella dublin (strain CT_02021853)</name>
    <dbReference type="NCBI Taxonomy" id="439851"/>
    <lineage>
        <taxon>Bacteria</taxon>
        <taxon>Pseudomonadati</taxon>
        <taxon>Pseudomonadota</taxon>
        <taxon>Gammaproteobacteria</taxon>
        <taxon>Enterobacterales</taxon>
        <taxon>Enterobacteriaceae</taxon>
        <taxon>Salmonella</taxon>
    </lineage>
</organism>
<proteinExistence type="inferred from homology"/>
<gene>
    <name evidence="1" type="primary">plsY</name>
    <name type="synonym">ygiH</name>
    <name type="ordered locus">SeD_A3563</name>
</gene>
<dbReference type="EC" id="2.3.1.15" evidence="1"/>
<dbReference type="EC" id="2.3.1.n5" evidence="1"/>
<dbReference type="EMBL" id="CP001144">
    <property type="protein sequence ID" value="ACH76528.1"/>
    <property type="molecule type" value="Genomic_DNA"/>
</dbReference>
<dbReference type="RefSeq" id="WP_001272784.1">
    <property type="nucleotide sequence ID" value="NC_011205.1"/>
</dbReference>
<dbReference type="SMR" id="B5FHU2"/>
<dbReference type="KEGG" id="sed:SeD_A3563"/>
<dbReference type="HOGENOM" id="CLU_081254_0_2_6"/>
<dbReference type="UniPathway" id="UPA00085"/>
<dbReference type="Proteomes" id="UP000008322">
    <property type="component" value="Chromosome"/>
</dbReference>
<dbReference type="GO" id="GO:0005886">
    <property type="term" value="C:plasma membrane"/>
    <property type="evidence" value="ECO:0007669"/>
    <property type="project" value="UniProtKB-SubCell"/>
</dbReference>
<dbReference type="GO" id="GO:0043772">
    <property type="term" value="F:acyl-phosphate glycerol-3-phosphate acyltransferase activity"/>
    <property type="evidence" value="ECO:0007669"/>
    <property type="project" value="InterPro"/>
</dbReference>
<dbReference type="GO" id="GO:0004366">
    <property type="term" value="F:glycerol-3-phosphate O-acyltransferase activity"/>
    <property type="evidence" value="ECO:0007669"/>
    <property type="project" value="UniProtKB-UniRule"/>
</dbReference>
<dbReference type="GO" id="GO:0008654">
    <property type="term" value="P:phospholipid biosynthetic process"/>
    <property type="evidence" value="ECO:0007669"/>
    <property type="project" value="UniProtKB-UniRule"/>
</dbReference>
<dbReference type="HAMAP" id="MF_01043">
    <property type="entry name" value="PlsY"/>
    <property type="match status" value="1"/>
</dbReference>
<dbReference type="InterPro" id="IPR003811">
    <property type="entry name" value="G3P_acylTferase_PlsY"/>
</dbReference>
<dbReference type="NCBIfam" id="TIGR00023">
    <property type="entry name" value="glycerol-3-phosphate 1-O-acyltransferase PlsY"/>
    <property type="match status" value="1"/>
</dbReference>
<dbReference type="PANTHER" id="PTHR30309:SF0">
    <property type="entry name" value="GLYCEROL-3-PHOSPHATE ACYLTRANSFERASE-RELATED"/>
    <property type="match status" value="1"/>
</dbReference>
<dbReference type="PANTHER" id="PTHR30309">
    <property type="entry name" value="INNER MEMBRANE PROTEIN YGIH"/>
    <property type="match status" value="1"/>
</dbReference>
<dbReference type="Pfam" id="PF02660">
    <property type="entry name" value="G3P_acyltransf"/>
    <property type="match status" value="1"/>
</dbReference>
<dbReference type="SMART" id="SM01207">
    <property type="entry name" value="G3P_acyltransf"/>
    <property type="match status" value="1"/>
</dbReference>
<sequence length="203" mass="21904">MSAIAPGMILFAYLCGSISSAILVCRIAGLPDPRESGSGNPGATNVLRIGGKGAAVAVLIFDILKGMLPVWGAYALGVTPFWLGLIAIAACLGHIWPVFFGFKGGKGVATAFGAIAPIGWDLTGVMAGTWLLTVLLSGYSSLGAIVSALIAPFYVWWFKPQFTFPVSMLSCLILLRHHDNIQRLWRRQETKIWTKLKKKRQKD</sequence>
<name>PLSY_SALDC</name>
<feature type="chain" id="PRO_1000136115" description="Glycerol-3-phosphate acyltransferase">
    <location>
        <begin position="1"/>
        <end position="203"/>
    </location>
</feature>
<feature type="topological domain" description="Periplasmic" evidence="1">
    <location>
        <begin position="1"/>
        <end position="3"/>
    </location>
</feature>
<feature type="transmembrane region" description="Helical" evidence="1">
    <location>
        <begin position="4"/>
        <end position="24"/>
    </location>
</feature>
<feature type="topological domain" description="Cytoplasmic" evidence="1">
    <location>
        <begin position="25"/>
        <end position="52"/>
    </location>
</feature>
<feature type="transmembrane region" description="Helical" evidence="1">
    <location>
        <begin position="53"/>
        <end position="73"/>
    </location>
</feature>
<feature type="topological domain" description="Periplasmic" evidence="1">
    <location>
        <begin position="74"/>
        <end position="80"/>
    </location>
</feature>
<feature type="transmembrane region" description="Helical" evidence="1">
    <location>
        <begin position="81"/>
        <end position="101"/>
    </location>
</feature>
<feature type="topological domain" description="Cytoplasmic" evidence="1">
    <location>
        <begin position="102"/>
        <end position="111"/>
    </location>
</feature>
<feature type="transmembrane region" description="Helical" evidence="1">
    <location>
        <begin position="112"/>
        <end position="132"/>
    </location>
</feature>
<feature type="topological domain" description="Periplasmic" evidence="1">
    <location>
        <begin position="133"/>
        <end position="137"/>
    </location>
</feature>
<feature type="transmembrane region" description="Helical" evidence="1">
    <location>
        <begin position="138"/>
        <end position="158"/>
    </location>
</feature>
<feature type="topological domain" description="Cytoplasmic" evidence="1">
    <location>
        <begin position="159"/>
        <end position="203"/>
    </location>
</feature>
<evidence type="ECO:0000255" key="1">
    <source>
        <dbReference type="HAMAP-Rule" id="MF_01043"/>
    </source>
</evidence>
<keyword id="KW-0997">Cell inner membrane</keyword>
<keyword id="KW-1003">Cell membrane</keyword>
<keyword id="KW-0444">Lipid biosynthesis</keyword>
<keyword id="KW-0443">Lipid metabolism</keyword>
<keyword id="KW-0472">Membrane</keyword>
<keyword id="KW-0594">Phospholipid biosynthesis</keyword>
<keyword id="KW-1208">Phospholipid metabolism</keyword>
<keyword id="KW-0808">Transferase</keyword>
<keyword id="KW-0812">Transmembrane</keyword>
<keyword id="KW-1133">Transmembrane helix</keyword>
<comment type="function">
    <text evidence="1">Catalyzes the transfer of an acyl group from acyl-ACP to glycerol-3-phosphate (G3P) to form lysophosphatidic acid (LPA). This enzyme can also utilize acyl-CoA as fatty acyl donor, but not acyl-PO(4).</text>
</comment>
<comment type="catalytic activity">
    <reaction evidence="1">
        <text>sn-glycerol 3-phosphate + an acyl-CoA = a 1-acyl-sn-glycero-3-phosphate + CoA</text>
        <dbReference type="Rhea" id="RHEA:15325"/>
        <dbReference type="ChEBI" id="CHEBI:57287"/>
        <dbReference type="ChEBI" id="CHEBI:57597"/>
        <dbReference type="ChEBI" id="CHEBI:57970"/>
        <dbReference type="ChEBI" id="CHEBI:58342"/>
        <dbReference type="EC" id="2.3.1.15"/>
    </reaction>
</comment>
<comment type="catalytic activity">
    <reaction evidence="1">
        <text>a fatty acyl-[ACP] + sn-glycerol 3-phosphate = a 1-acyl-sn-glycero-3-phosphate + holo-[ACP]</text>
        <dbReference type="Rhea" id="RHEA:42300"/>
        <dbReference type="Rhea" id="RHEA-COMP:9685"/>
        <dbReference type="Rhea" id="RHEA-COMP:14125"/>
        <dbReference type="ChEBI" id="CHEBI:57597"/>
        <dbReference type="ChEBI" id="CHEBI:57970"/>
        <dbReference type="ChEBI" id="CHEBI:64479"/>
        <dbReference type="ChEBI" id="CHEBI:138651"/>
        <dbReference type="EC" id="2.3.1.n5"/>
    </reaction>
</comment>
<comment type="pathway">
    <text evidence="1">Lipid metabolism; phospholipid metabolism.</text>
</comment>
<comment type="subunit">
    <text evidence="1">Probably interacts with PlsX.</text>
</comment>
<comment type="subcellular location">
    <subcellularLocation>
        <location evidence="1">Cell inner membrane</location>
        <topology evidence="1">Multi-pass membrane protein</topology>
    </subcellularLocation>
</comment>
<comment type="similarity">
    <text evidence="1">Belongs to the PlsY family.</text>
</comment>
<accession>B5FHU2</accession>